<proteinExistence type="inferred from homology"/>
<evidence type="ECO:0000255" key="1">
    <source>
        <dbReference type="HAMAP-Rule" id="MF_01554"/>
    </source>
</evidence>
<gene>
    <name evidence="1" type="primary">glmM</name>
    <name type="ordered locus">Swol_2100</name>
</gene>
<organism>
    <name type="scientific">Syntrophomonas wolfei subsp. wolfei (strain DSM 2245B / Goettingen)</name>
    <dbReference type="NCBI Taxonomy" id="335541"/>
    <lineage>
        <taxon>Bacteria</taxon>
        <taxon>Bacillati</taxon>
        <taxon>Bacillota</taxon>
        <taxon>Clostridia</taxon>
        <taxon>Eubacteriales</taxon>
        <taxon>Syntrophomonadaceae</taxon>
        <taxon>Syntrophomonas</taxon>
    </lineage>
</organism>
<keyword id="KW-0413">Isomerase</keyword>
<keyword id="KW-0460">Magnesium</keyword>
<keyword id="KW-0479">Metal-binding</keyword>
<keyword id="KW-0597">Phosphoprotein</keyword>
<keyword id="KW-1185">Reference proteome</keyword>
<reference key="1">
    <citation type="journal article" date="2010" name="Environ. Microbiol.">
        <title>The genome of Syntrophomonas wolfei: new insights into syntrophic metabolism and biohydrogen production.</title>
        <authorList>
            <person name="Sieber J.R."/>
            <person name="Sims D.R."/>
            <person name="Han C."/>
            <person name="Kim E."/>
            <person name="Lykidis A."/>
            <person name="Lapidus A.L."/>
            <person name="McDonnald E."/>
            <person name="Rohlin L."/>
            <person name="Culley D.E."/>
            <person name="Gunsalus R."/>
            <person name="McInerney M.J."/>
        </authorList>
    </citation>
    <scope>NUCLEOTIDE SEQUENCE [LARGE SCALE GENOMIC DNA]</scope>
    <source>
        <strain>DSM 2245B / Goettingen</strain>
    </source>
</reference>
<accession>Q0AV62</accession>
<comment type="function">
    <text evidence="1">Catalyzes the conversion of glucosamine-6-phosphate to glucosamine-1-phosphate.</text>
</comment>
<comment type="catalytic activity">
    <reaction evidence="1">
        <text>alpha-D-glucosamine 1-phosphate = D-glucosamine 6-phosphate</text>
        <dbReference type="Rhea" id="RHEA:23424"/>
        <dbReference type="ChEBI" id="CHEBI:58516"/>
        <dbReference type="ChEBI" id="CHEBI:58725"/>
        <dbReference type="EC" id="5.4.2.10"/>
    </reaction>
</comment>
<comment type="cofactor">
    <cofactor evidence="1">
        <name>Mg(2+)</name>
        <dbReference type="ChEBI" id="CHEBI:18420"/>
    </cofactor>
    <text evidence="1">Binds 1 Mg(2+) ion per subunit.</text>
</comment>
<comment type="PTM">
    <text evidence="1">Activated by phosphorylation.</text>
</comment>
<comment type="similarity">
    <text evidence="1">Belongs to the phosphohexose mutase family.</text>
</comment>
<name>GLMM_SYNWW</name>
<protein>
    <recommendedName>
        <fullName evidence="1">Phosphoglucosamine mutase</fullName>
        <ecNumber evidence="1">5.4.2.10</ecNumber>
    </recommendedName>
</protein>
<sequence>MGKLFGTDGVRGVANLELTPELAFQLGRAGSYVLARHEASKRPRILVGKDTRISGDMLEAALIAGICSTGADVLTVGILPTPAVAFLTQRYQASCGVVISASHNPLEDNGIKFFGPSGYKLPDELEEEIEELVLAGTQELQRPQGEDVGRVYLVAEARNNYLDYLISCYSQDQNLAGITVVVDCANGAAYSTGPELWSRLGAQVIAINNYPNGVNINERCGSTYTEGLRRAVVEHKADMGIAYDGDADRCIVVDERGNELDGDHIIMICALDMNSRGELNPPLVAATVMSNIGLDIALRRENIQVASCKVGDRYVLEKMKESGALLGGEQSGHIIFLEHATTGDGLLTSLKVAEVLRRSGLTLSELARGLEKQPQLLVNLRMENKDKILAHPLVQEALKQAEERLGEWGKLVVRPSGTEPVVRIMAQGPEQYLLEEVIAEIKQSIERAQA</sequence>
<dbReference type="EC" id="5.4.2.10" evidence="1"/>
<dbReference type="EMBL" id="CP000448">
    <property type="protein sequence ID" value="ABI69392.1"/>
    <property type="molecule type" value="Genomic_DNA"/>
</dbReference>
<dbReference type="RefSeq" id="WP_011641483.1">
    <property type="nucleotide sequence ID" value="NC_008346.1"/>
</dbReference>
<dbReference type="SMR" id="Q0AV62"/>
<dbReference type="STRING" id="335541.Swol_2100"/>
<dbReference type="KEGG" id="swo:Swol_2100"/>
<dbReference type="eggNOG" id="COG1109">
    <property type="taxonomic scope" value="Bacteria"/>
</dbReference>
<dbReference type="HOGENOM" id="CLU_016950_7_0_9"/>
<dbReference type="OrthoDB" id="9806956at2"/>
<dbReference type="Proteomes" id="UP000001968">
    <property type="component" value="Chromosome"/>
</dbReference>
<dbReference type="GO" id="GO:0005829">
    <property type="term" value="C:cytosol"/>
    <property type="evidence" value="ECO:0007669"/>
    <property type="project" value="TreeGrafter"/>
</dbReference>
<dbReference type="GO" id="GO:0000287">
    <property type="term" value="F:magnesium ion binding"/>
    <property type="evidence" value="ECO:0007669"/>
    <property type="project" value="UniProtKB-UniRule"/>
</dbReference>
<dbReference type="GO" id="GO:0008966">
    <property type="term" value="F:phosphoglucosamine mutase activity"/>
    <property type="evidence" value="ECO:0007669"/>
    <property type="project" value="UniProtKB-UniRule"/>
</dbReference>
<dbReference type="GO" id="GO:0004615">
    <property type="term" value="F:phosphomannomutase activity"/>
    <property type="evidence" value="ECO:0007669"/>
    <property type="project" value="TreeGrafter"/>
</dbReference>
<dbReference type="GO" id="GO:0005975">
    <property type="term" value="P:carbohydrate metabolic process"/>
    <property type="evidence" value="ECO:0007669"/>
    <property type="project" value="InterPro"/>
</dbReference>
<dbReference type="GO" id="GO:0009252">
    <property type="term" value="P:peptidoglycan biosynthetic process"/>
    <property type="evidence" value="ECO:0007669"/>
    <property type="project" value="TreeGrafter"/>
</dbReference>
<dbReference type="GO" id="GO:0006048">
    <property type="term" value="P:UDP-N-acetylglucosamine biosynthetic process"/>
    <property type="evidence" value="ECO:0007669"/>
    <property type="project" value="TreeGrafter"/>
</dbReference>
<dbReference type="CDD" id="cd05802">
    <property type="entry name" value="GlmM"/>
    <property type="match status" value="1"/>
</dbReference>
<dbReference type="FunFam" id="3.40.120.10:FF:000001">
    <property type="entry name" value="Phosphoglucosamine mutase"/>
    <property type="match status" value="1"/>
</dbReference>
<dbReference type="FunFam" id="3.40.120.10:FF:000003">
    <property type="entry name" value="Phosphoglucosamine mutase"/>
    <property type="match status" value="1"/>
</dbReference>
<dbReference type="Gene3D" id="3.40.120.10">
    <property type="entry name" value="Alpha-D-Glucose-1,6-Bisphosphate, subunit A, domain 3"/>
    <property type="match status" value="3"/>
</dbReference>
<dbReference type="Gene3D" id="3.30.310.50">
    <property type="entry name" value="Alpha-D-phosphohexomutase, C-terminal domain"/>
    <property type="match status" value="1"/>
</dbReference>
<dbReference type="HAMAP" id="MF_01554_B">
    <property type="entry name" value="GlmM_B"/>
    <property type="match status" value="1"/>
</dbReference>
<dbReference type="InterPro" id="IPR005844">
    <property type="entry name" value="A-D-PHexomutase_a/b/a-I"/>
</dbReference>
<dbReference type="InterPro" id="IPR016055">
    <property type="entry name" value="A-D-PHexomutase_a/b/a-I/II/III"/>
</dbReference>
<dbReference type="InterPro" id="IPR005845">
    <property type="entry name" value="A-D-PHexomutase_a/b/a-II"/>
</dbReference>
<dbReference type="InterPro" id="IPR005846">
    <property type="entry name" value="A-D-PHexomutase_a/b/a-III"/>
</dbReference>
<dbReference type="InterPro" id="IPR005843">
    <property type="entry name" value="A-D-PHexomutase_C"/>
</dbReference>
<dbReference type="InterPro" id="IPR036900">
    <property type="entry name" value="A-D-PHexomutase_C_sf"/>
</dbReference>
<dbReference type="InterPro" id="IPR016066">
    <property type="entry name" value="A-D-PHexomutase_CS"/>
</dbReference>
<dbReference type="InterPro" id="IPR005841">
    <property type="entry name" value="Alpha-D-phosphohexomutase_SF"/>
</dbReference>
<dbReference type="InterPro" id="IPR006352">
    <property type="entry name" value="GlmM_bact"/>
</dbReference>
<dbReference type="InterPro" id="IPR050060">
    <property type="entry name" value="Phosphoglucosamine_mutase"/>
</dbReference>
<dbReference type="NCBIfam" id="TIGR01455">
    <property type="entry name" value="glmM"/>
    <property type="match status" value="1"/>
</dbReference>
<dbReference type="NCBIfam" id="NF008139">
    <property type="entry name" value="PRK10887.1"/>
    <property type="match status" value="1"/>
</dbReference>
<dbReference type="PANTHER" id="PTHR42946:SF1">
    <property type="entry name" value="PHOSPHOGLUCOMUTASE (ALPHA-D-GLUCOSE-1,6-BISPHOSPHATE-DEPENDENT)"/>
    <property type="match status" value="1"/>
</dbReference>
<dbReference type="PANTHER" id="PTHR42946">
    <property type="entry name" value="PHOSPHOHEXOSE MUTASE"/>
    <property type="match status" value="1"/>
</dbReference>
<dbReference type="Pfam" id="PF02878">
    <property type="entry name" value="PGM_PMM_I"/>
    <property type="match status" value="1"/>
</dbReference>
<dbReference type="Pfam" id="PF02879">
    <property type="entry name" value="PGM_PMM_II"/>
    <property type="match status" value="1"/>
</dbReference>
<dbReference type="Pfam" id="PF02880">
    <property type="entry name" value="PGM_PMM_III"/>
    <property type="match status" value="1"/>
</dbReference>
<dbReference type="Pfam" id="PF00408">
    <property type="entry name" value="PGM_PMM_IV"/>
    <property type="match status" value="1"/>
</dbReference>
<dbReference type="PRINTS" id="PR00509">
    <property type="entry name" value="PGMPMM"/>
</dbReference>
<dbReference type="SUPFAM" id="SSF55957">
    <property type="entry name" value="Phosphoglucomutase, C-terminal domain"/>
    <property type="match status" value="1"/>
</dbReference>
<dbReference type="SUPFAM" id="SSF53738">
    <property type="entry name" value="Phosphoglucomutase, first 3 domains"/>
    <property type="match status" value="3"/>
</dbReference>
<dbReference type="PROSITE" id="PS00710">
    <property type="entry name" value="PGM_PMM"/>
    <property type="match status" value="1"/>
</dbReference>
<feature type="chain" id="PRO_0000301397" description="Phosphoglucosamine mutase">
    <location>
        <begin position="1"/>
        <end position="450"/>
    </location>
</feature>
<feature type="active site" description="Phosphoserine intermediate" evidence="1">
    <location>
        <position position="102"/>
    </location>
</feature>
<feature type="binding site" description="via phosphate group" evidence="1">
    <location>
        <position position="102"/>
    </location>
    <ligand>
        <name>Mg(2+)</name>
        <dbReference type="ChEBI" id="CHEBI:18420"/>
    </ligand>
</feature>
<feature type="binding site" evidence="1">
    <location>
        <position position="244"/>
    </location>
    <ligand>
        <name>Mg(2+)</name>
        <dbReference type="ChEBI" id="CHEBI:18420"/>
    </ligand>
</feature>
<feature type="binding site" evidence="1">
    <location>
        <position position="246"/>
    </location>
    <ligand>
        <name>Mg(2+)</name>
        <dbReference type="ChEBI" id="CHEBI:18420"/>
    </ligand>
</feature>
<feature type="binding site" evidence="1">
    <location>
        <position position="248"/>
    </location>
    <ligand>
        <name>Mg(2+)</name>
        <dbReference type="ChEBI" id="CHEBI:18420"/>
    </ligand>
</feature>
<feature type="modified residue" description="Phosphoserine" evidence="1">
    <location>
        <position position="102"/>
    </location>
</feature>